<feature type="chain" id="PRO_1000016571" description="tRNA uridine 5-carboxymethylaminomethyl modification enzyme MnmG">
    <location>
        <begin position="1"/>
        <end position="656"/>
    </location>
</feature>
<feature type="region of interest" description="Disordered" evidence="2">
    <location>
        <begin position="636"/>
        <end position="656"/>
    </location>
</feature>
<feature type="compositionally biased region" description="Polar residues" evidence="2">
    <location>
        <begin position="644"/>
        <end position="656"/>
    </location>
</feature>
<feature type="binding site" evidence="1">
    <location>
        <begin position="13"/>
        <end position="18"/>
    </location>
    <ligand>
        <name>FAD</name>
        <dbReference type="ChEBI" id="CHEBI:57692"/>
    </ligand>
</feature>
<feature type="binding site" evidence="1">
    <location>
        <begin position="274"/>
        <end position="288"/>
    </location>
    <ligand>
        <name>NAD(+)</name>
        <dbReference type="ChEBI" id="CHEBI:57540"/>
    </ligand>
</feature>
<gene>
    <name evidence="1" type="primary">mnmG</name>
    <name evidence="1" type="synonym">gidA</name>
    <name type="ordered locus">Bcep1808_0102</name>
</gene>
<evidence type="ECO:0000255" key="1">
    <source>
        <dbReference type="HAMAP-Rule" id="MF_00129"/>
    </source>
</evidence>
<evidence type="ECO:0000256" key="2">
    <source>
        <dbReference type="SAM" id="MobiDB-lite"/>
    </source>
</evidence>
<comment type="function">
    <text evidence="1">NAD-binding protein involved in the addition of a carboxymethylaminomethyl (cmnm) group at the wobble position (U34) of certain tRNAs, forming tRNA-cmnm(5)s(2)U34.</text>
</comment>
<comment type="cofactor">
    <cofactor evidence="1">
        <name>FAD</name>
        <dbReference type="ChEBI" id="CHEBI:57692"/>
    </cofactor>
</comment>
<comment type="subunit">
    <text evidence="1">Homodimer. Heterotetramer of two MnmE and two MnmG subunits.</text>
</comment>
<comment type="subcellular location">
    <subcellularLocation>
        <location evidence="1">Cytoplasm</location>
    </subcellularLocation>
</comment>
<comment type="similarity">
    <text evidence="1">Belongs to the MnmG family.</text>
</comment>
<organism>
    <name type="scientific">Burkholderia vietnamiensis (strain G4 / LMG 22486)</name>
    <name type="common">Burkholderia cepacia (strain R1808)</name>
    <dbReference type="NCBI Taxonomy" id="269482"/>
    <lineage>
        <taxon>Bacteria</taxon>
        <taxon>Pseudomonadati</taxon>
        <taxon>Pseudomonadota</taxon>
        <taxon>Betaproteobacteria</taxon>
        <taxon>Burkholderiales</taxon>
        <taxon>Burkholderiaceae</taxon>
        <taxon>Burkholderia</taxon>
        <taxon>Burkholderia cepacia complex</taxon>
    </lineage>
</organism>
<dbReference type="EMBL" id="CP000614">
    <property type="protein sequence ID" value="ABO53125.1"/>
    <property type="molecule type" value="Genomic_DNA"/>
</dbReference>
<dbReference type="SMR" id="A4JA22"/>
<dbReference type="KEGG" id="bvi:Bcep1808_0102"/>
<dbReference type="eggNOG" id="COG0445">
    <property type="taxonomic scope" value="Bacteria"/>
</dbReference>
<dbReference type="HOGENOM" id="CLU_007831_2_2_4"/>
<dbReference type="Proteomes" id="UP000002287">
    <property type="component" value="Chromosome 1"/>
</dbReference>
<dbReference type="GO" id="GO:0005829">
    <property type="term" value="C:cytosol"/>
    <property type="evidence" value="ECO:0007669"/>
    <property type="project" value="TreeGrafter"/>
</dbReference>
<dbReference type="GO" id="GO:0050660">
    <property type="term" value="F:flavin adenine dinucleotide binding"/>
    <property type="evidence" value="ECO:0007669"/>
    <property type="project" value="UniProtKB-UniRule"/>
</dbReference>
<dbReference type="GO" id="GO:0030488">
    <property type="term" value="P:tRNA methylation"/>
    <property type="evidence" value="ECO:0007669"/>
    <property type="project" value="TreeGrafter"/>
</dbReference>
<dbReference type="GO" id="GO:0002098">
    <property type="term" value="P:tRNA wobble uridine modification"/>
    <property type="evidence" value="ECO:0007669"/>
    <property type="project" value="InterPro"/>
</dbReference>
<dbReference type="FunFam" id="1.10.10.1800:FF:000001">
    <property type="entry name" value="tRNA uridine 5-carboxymethylaminomethyl modification enzyme MnmG"/>
    <property type="match status" value="1"/>
</dbReference>
<dbReference type="FunFam" id="1.10.150.570:FF:000001">
    <property type="entry name" value="tRNA uridine 5-carboxymethylaminomethyl modification enzyme MnmG"/>
    <property type="match status" value="1"/>
</dbReference>
<dbReference type="FunFam" id="3.50.50.60:FF:000002">
    <property type="entry name" value="tRNA uridine 5-carboxymethylaminomethyl modification enzyme MnmG"/>
    <property type="match status" value="1"/>
</dbReference>
<dbReference type="FunFam" id="3.50.50.60:FF:000010">
    <property type="entry name" value="tRNA uridine 5-carboxymethylaminomethyl modification enzyme MnmG"/>
    <property type="match status" value="1"/>
</dbReference>
<dbReference type="Gene3D" id="3.50.50.60">
    <property type="entry name" value="FAD/NAD(P)-binding domain"/>
    <property type="match status" value="2"/>
</dbReference>
<dbReference type="Gene3D" id="1.10.150.570">
    <property type="entry name" value="GidA associated domain, C-terminal subdomain"/>
    <property type="match status" value="1"/>
</dbReference>
<dbReference type="Gene3D" id="1.10.10.1800">
    <property type="entry name" value="tRNA uridine 5-carboxymethylaminomethyl modification enzyme MnmG/GidA"/>
    <property type="match status" value="1"/>
</dbReference>
<dbReference type="HAMAP" id="MF_00129">
    <property type="entry name" value="MnmG_GidA"/>
    <property type="match status" value="1"/>
</dbReference>
<dbReference type="InterPro" id="IPR036188">
    <property type="entry name" value="FAD/NAD-bd_sf"/>
</dbReference>
<dbReference type="InterPro" id="IPR049312">
    <property type="entry name" value="GIDA_C_N"/>
</dbReference>
<dbReference type="InterPro" id="IPR004416">
    <property type="entry name" value="MnmG"/>
</dbReference>
<dbReference type="InterPro" id="IPR002218">
    <property type="entry name" value="MnmG-rel"/>
</dbReference>
<dbReference type="InterPro" id="IPR020595">
    <property type="entry name" value="MnmG-rel_CS"/>
</dbReference>
<dbReference type="InterPro" id="IPR026904">
    <property type="entry name" value="MnmG_C"/>
</dbReference>
<dbReference type="InterPro" id="IPR047001">
    <property type="entry name" value="MnmG_C_subdom"/>
</dbReference>
<dbReference type="InterPro" id="IPR044920">
    <property type="entry name" value="MnmG_C_subdom_sf"/>
</dbReference>
<dbReference type="InterPro" id="IPR040131">
    <property type="entry name" value="MnmG_N"/>
</dbReference>
<dbReference type="NCBIfam" id="TIGR00136">
    <property type="entry name" value="mnmG_gidA"/>
    <property type="match status" value="1"/>
</dbReference>
<dbReference type="PANTHER" id="PTHR11806">
    <property type="entry name" value="GLUCOSE INHIBITED DIVISION PROTEIN A"/>
    <property type="match status" value="1"/>
</dbReference>
<dbReference type="PANTHER" id="PTHR11806:SF0">
    <property type="entry name" value="PROTEIN MTO1 HOMOLOG, MITOCHONDRIAL"/>
    <property type="match status" value="1"/>
</dbReference>
<dbReference type="Pfam" id="PF01134">
    <property type="entry name" value="GIDA"/>
    <property type="match status" value="1"/>
</dbReference>
<dbReference type="Pfam" id="PF21680">
    <property type="entry name" value="GIDA_C_1st"/>
    <property type="match status" value="1"/>
</dbReference>
<dbReference type="Pfam" id="PF13932">
    <property type="entry name" value="SAM_GIDA_C"/>
    <property type="match status" value="1"/>
</dbReference>
<dbReference type="SMART" id="SM01228">
    <property type="entry name" value="GIDA_assoc_3"/>
    <property type="match status" value="1"/>
</dbReference>
<dbReference type="SUPFAM" id="SSF51905">
    <property type="entry name" value="FAD/NAD(P)-binding domain"/>
    <property type="match status" value="1"/>
</dbReference>
<dbReference type="PROSITE" id="PS01280">
    <property type="entry name" value="GIDA_1"/>
    <property type="match status" value="1"/>
</dbReference>
<dbReference type="PROSITE" id="PS01281">
    <property type="entry name" value="GIDA_2"/>
    <property type="match status" value="1"/>
</dbReference>
<protein>
    <recommendedName>
        <fullName evidence="1">tRNA uridine 5-carboxymethylaminomethyl modification enzyme MnmG</fullName>
    </recommendedName>
    <alternativeName>
        <fullName evidence="1">Glucose-inhibited division protein A</fullName>
    </alternativeName>
</protein>
<keyword id="KW-0963">Cytoplasm</keyword>
<keyword id="KW-0274">FAD</keyword>
<keyword id="KW-0285">Flavoprotein</keyword>
<keyword id="KW-0520">NAD</keyword>
<keyword id="KW-0819">tRNA processing</keyword>
<proteinExistence type="inferred from homology"/>
<name>MNMG_BURVG</name>
<reference key="1">
    <citation type="submission" date="2007-03" db="EMBL/GenBank/DDBJ databases">
        <title>Complete sequence of chromosome 1 of Burkholderia vietnamiensis G4.</title>
        <authorList>
            <consortium name="US DOE Joint Genome Institute"/>
            <person name="Copeland A."/>
            <person name="Lucas S."/>
            <person name="Lapidus A."/>
            <person name="Barry K."/>
            <person name="Detter J.C."/>
            <person name="Glavina del Rio T."/>
            <person name="Hammon N."/>
            <person name="Israni S."/>
            <person name="Dalin E."/>
            <person name="Tice H."/>
            <person name="Pitluck S."/>
            <person name="Chain P."/>
            <person name="Malfatti S."/>
            <person name="Shin M."/>
            <person name="Vergez L."/>
            <person name="Schmutz J."/>
            <person name="Larimer F."/>
            <person name="Land M."/>
            <person name="Hauser L."/>
            <person name="Kyrpides N."/>
            <person name="Tiedje J."/>
            <person name="Richardson P."/>
        </authorList>
    </citation>
    <scope>NUCLEOTIDE SEQUENCE [LARGE SCALE GENOMIC DNA]</scope>
    <source>
        <strain>G4 / LMG 22486</strain>
    </source>
</reference>
<accession>A4JA22</accession>
<sequence>MLFPTEFDVIVVGGGHAGTEAALASARMGAKTLLLTHNIETLGQMSCNPSIGGIGKGHLVKEVDALGGAMAAATDESGIQFRILNSSKGPAVRATRAQADRILYKAAIRHRLENQPNLWLFQQAVDDLMVEGDRVVGAVTQIGIRFRARAVVLTAGTFLDGKIHVGLNNYTGGRAGDPAAVSLSARLKELKLPQGRLKTGTPPRIDGRSIDFSKLDEQPGDLDPIPVFSFLGRAEQHPQQLPCWVTHTNERTHDIIRGGLDRSPMYTGVIEGVGPRYCPSIEDKIHRFASKESHQIFLEPEGLTTNEFYPNGISTSLPFDVQLELVHSMRGLENAHILRPGYAIEYDYFDPRALKASLETKAINGLFFAGQINGTTGYEEAAAQGLLAGLNAGRYVQEKDAWCPRRDQAYLGVLVDDLVTRGVAEPYRMFTSRAEYRLSLREDNADMRLTEIGRELGLVDDVRWDAFSRKRDAVSRETERLKSTWVTPKTLPPEEATALLGKPIDHEYSLAELLRRPGISYDGVCGLKGGECGPVEPLADEPVLLGQIKEQVEIGIKYQGYIERQANEIERNDANENTRLPDGIDYREVRGLSFEVSQKLNEFRPETIGQASRISGVTPAAISLLMVHLKRRGLGRRNGAAAETTEQGGDTVPTQQ</sequence>